<reference key="1">
    <citation type="journal article" date="2007" name="PLoS Genet.">
        <title>Meningococcal genetic variation mechanisms viewed through comparative analysis of serogroup C strain FAM18.</title>
        <authorList>
            <person name="Bentley S.D."/>
            <person name="Vernikos G.S."/>
            <person name="Snyder L.A.S."/>
            <person name="Churcher C."/>
            <person name="Arrowsmith C."/>
            <person name="Chillingworth T."/>
            <person name="Cronin A."/>
            <person name="Davis P.H."/>
            <person name="Holroyd N.E."/>
            <person name="Jagels K."/>
            <person name="Maddison M."/>
            <person name="Moule S."/>
            <person name="Rabbinowitsch E."/>
            <person name="Sharp S."/>
            <person name="Unwin L."/>
            <person name="Whitehead S."/>
            <person name="Quail M.A."/>
            <person name="Achtman M."/>
            <person name="Barrell B.G."/>
            <person name="Saunders N.J."/>
            <person name="Parkhill J."/>
        </authorList>
    </citation>
    <scope>NUCLEOTIDE SEQUENCE [LARGE SCALE GENOMIC DNA]</scope>
    <source>
        <strain>ATCC 700532 / DSM 15464 / FAM18</strain>
    </source>
</reference>
<accession>A1KSM7</accession>
<sequence length="273" mass="30966">MSSPRHVFYISDRTGLTAENIGEALLNQFGNLSFKRHTHPFVDTPEKARAVVEKVNRSRQENGQRPIAFVSVVDDEIRRIIKGADAFQINFFETFLGLLEKELNTEATASEQGHHSIGNTKRYDARMEAVNFSLNHDDGVSDKNLQEADVILMGVSRSGKTPTCLYLALQYGIRAANYPLIPDDLESADLPRMVKPYRDKLFGLTIQPERLQAIRQERRPNSTYAKIDTCRSEVADAQSMFRRHGIPFANTTDKSVEELAVHILQACKLKRRF</sequence>
<name>PSRP_NEIMF</name>
<protein>
    <recommendedName>
        <fullName evidence="1">Putative phosphoenolpyruvate synthase regulatory protein</fullName>
        <shortName evidence="1">PEP synthase regulatory protein</shortName>
        <shortName evidence="1">PSRP</shortName>
        <ecNumber evidence="1">2.7.11.33</ecNumber>
        <ecNumber evidence="1">2.7.4.28</ecNumber>
    </recommendedName>
    <alternativeName>
        <fullName evidence="1">Pyruvate, water dikinase regulatory protein</fullName>
    </alternativeName>
</protein>
<evidence type="ECO:0000255" key="1">
    <source>
        <dbReference type="HAMAP-Rule" id="MF_01062"/>
    </source>
</evidence>
<proteinExistence type="inferred from homology"/>
<organism>
    <name type="scientific">Neisseria meningitidis serogroup C / serotype 2a (strain ATCC 700532 / DSM 15464 / FAM18)</name>
    <dbReference type="NCBI Taxonomy" id="272831"/>
    <lineage>
        <taxon>Bacteria</taxon>
        <taxon>Pseudomonadati</taxon>
        <taxon>Pseudomonadota</taxon>
        <taxon>Betaproteobacteria</taxon>
        <taxon>Neisseriales</taxon>
        <taxon>Neisseriaceae</taxon>
        <taxon>Neisseria</taxon>
    </lineage>
</organism>
<dbReference type="EC" id="2.7.11.33" evidence="1"/>
<dbReference type="EC" id="2.7.4.28" evidence="1"/>
<dbReference type="EMBL" id="AM421808">
    <property type="protein sequence ID" value="CAM09857.1"/>
    <property type="molecule type" value="Genomic_DNA"/>
</dbReference>
<dbReference type="RefSeq" id="WP_002214270.1">
    <property type="nucleotide sequence ID" value="NC_008767.1"/>
</dbReference>
<dbReference type="SMR" id="A1KSM7"/>
<dbReference type="KEGG" id="nmc:NMC0562"/>
<dbReference type="HOGENOM" id="CLU_046206_1_0_4"/>
<dbReference type="Proteomes" id="UP000002286">
    <property type="component" value="Chromosome"/>
</dbReference>
<dbReference type="GO" id="GO:0043531">
    <property type="term" value="F:ADP binding"/>
    <property type="evidence" value="ECO:0007669"/>
    <property type="project" value="UniProtKB-UniRule"/>
</dbReference>
<dbReference type="GO" id="GO:0005524">
    <property type="term" value="F:ATP binding"/>
    <property type="evidence" value="ECO:0007669"/>
    <property type="project" value="InterPro"/>
</dbReference>
<dbReference type="GO" id="GO:0016776">
    <property type="term" value="F:phosphotransferase activity, phosphate group as acceptor"/>
    <property type="evidence" value="ECO:0007669"/>
    <property type="project" value="UniProtKB-UniRule"/>
</dbReference>
<dbReference type="GO" id="GO:0004674">
    <property type="term" value="F:protein serine/threonine kinase activity"/>
    <property type="evidence" value="ECO:0007669"/>
    <property type="project" value="UniProtKB-UniRule"/>
</dbReference>
<dbReference type="HAMAP" id="MF_01062">
    <property type="entry name" value="PSRP"/>
    <property type="match status" value="1"/>
</dbReference>
<dbReference type="InterPro" id="IPR005177">
    <property type="entry name" value="Kinase-pyrophosphorylase"/>
</dbReference>
<dbReference type="InterPro" id="IPR026530">
    <property type="entry name" value="PSRP"/>
</dbReference>
<dbReference type="NCBIfam" id="NF003742">
    <property type="entry name" value="PRK05339.1"/>
    <property type="match status" value="1"/>
</dbReference>
<dbReference type="PANTHER" id="PTHR31756">
    <property type="entry name" value="PYRUVATE, PHOSPHATE DIKINASE REGULATORY PROTEIN 1, CHLOROPLASTIC"/>
    <property type="match status" value="1"/>
</dbReference>
<dbReference type="PANTHER" id="PTHR31756:SF3">
    <property type="entry name" value="PYRUVATE, PHOSPHATE DIKINASE REGULATORY PROTEIN 1, CHLOROPLASTIC"/>
    <property type="match status" value="1"/>
</dbReference>
<dbReference type="Pfam" id="PF03618">
    <property type="entry name" value="Kinase-PPPase"/>
    <property type="match status" value="1"/>
</dbReference>
<comment type="function">
    <text evidence="1">Bifunctional serine/threonine kinase and phosphorylase involved in the regulation of the phosphoenolpyruvate synthase (PEPS) by catalyzing its phosphorylation/dephosphorylation.</text>
</comment>
<comment type="catalytic activity">
    <reaction evidence="1">
        <text>[pyruvate, water dikinase] + ADP = [pyruvate, water dikinase]-phosphate + AMP + H(+)</text>
        <dbReference type="Rhea" id="RHEA:46020"/>
        <dbReference type="Rhea" id="RHEA-COMP:11425"/>
        <dbReference type="Rhea" id="RHEA-COMP:11426"/>
        <dbReference type="ChEBI" id="CHEBI:15378"/>
        <dbReference type="ChEBI" id="CHEBI:43176"/>
        <dbReference type="ChEBI" id="CHEBI:68546"/>
        <dbReference type="ChEBI" id="CHEBI:456215"/>
        <dbReference type="ChEBI" id="CHEBI:456216"/>
        <dbReference type="EC" id="2.7.11.33"/>
    </reaction>
</comment>
<comment type="catalytic activity">
    <reaction evidence="1">
        <text>[pyruvate, water dikinase]-phosphate + phosphate + H(+) = [pyruvate, water dikinase] + diphosphate</text>
        <dbReference type="Rhea" id="RHEA:48580"/>
        <dbReference type="Rhea" id="RHEA-COMP:11425"/>
        <dbReference type="Rhea" id="RHEA-COMP:11426"/>
        <dbReference type="ChEBI" id="CHEBI:15378"/>
        <dbReference type="ChEBI" id="CHEBI:33019"/>
        <dbReference type="ChEBI" id="CHEBI:43176"/>
        <dbReference type="ChEBI" id="CHEBI:43474"/>
        <dbReference type="ChEBI" id="CHEBI:68546"/>
        <dbReference type="EC" id="2.7.4.28"/>
    </reaction>
</comment>
<comment type="similarity">
    <text evidence="1">Belongs to the pyruvate, phosphate/water dikinase regulatory protein family. PSRP subfamily.</text>
</comment>
<gene>
    <name type="ordered locus">NMC0562</name>
</gene>
<keyword id="KW-0418">Kinase</keyword>
<keyword id="KW-0547">Nucleotide-binding</keyword>
<keyword id="KW-0723">Serine/threonine-protein kinase</keyword>
<keyword id="KW-0808">Transferase</keyword>
<feature type="chain" id="PRO_0000316703" description="Putative phosphoenolpyruvate synthase regulatory protein">
    <location>
        <begin position="1"/>
        <end position="273"/>
    </location>
</feature>
<feature type="binding site" evidence="1">
    <location>
        <begin position="154"/>
        <end position="161"/>
    </location>
    <ligand>
        <name>ADP</name>
        <dbReference type="ChEBI" id="CHEBI:456216"/>
    </ligand>
</feature>